<reference key="1">
    <citation type="journal article" date="2000" name="Nature">
        <title>The genome sequence of the food-borne pathogen Campylobacter jejuni reveals hypervariable sequences.</title>
        <authorList>
            <person name="Parkhill J."/>
            <person name="Wren B.W."/>
            <person name="Mungall K.L."/>
            <person name="Ketley J.M."/>
            <person name="Churcher C.M."/>
            <person name="Basham D."/>
            <person name="Chillingworth T."/>
            <person name="Davies R.M."/>
            <person name="Feltwell T."/>
            <person name="Holroyd S."/>
            <person name="Jagels K."/>
            <person name="Karlyshev A.V."/>
            <person name="Moule S."/>
            <person name="Pallen M.J."/>
            <person name="Penn C.W."/>
            <person name="Quail M.A."/>
            <person name="Rajandream M.A."/>
            <person name="Rutherford K.M."/>
            <person name="van Vliet A.H.M."/>
            <person name="Whitehead S."/>
            <person name="Barrell B.G."/>
        </authorList>
    </citation>
    <scope>NUCLEOTIDE SEQUENCE [LARGE SCALE GENOMIC DNA]</scope>
    <source>
        <strain>ATCC 700819 / NCTC 11168</strain>
    </source>
</reference>
<sequence>MIFLKNICKNIGENAILKNVSLSIEKGEFVAIIGQSGSGKTSLLNIIGTLDTPSSGTYVFDEYEVTKLNNDEKARLRREKIGFIFQRYNLLSLLSAKENVSLPAVYAGKNLQERSQNAKKLLNDLELAHKLDSKPNELSGGQQQRVSIARALINGGELILADEPTGALDSKSGIMVLEILQKLNEQGHTIVLVTHDPKIAAQAKRVIEIKDGEILSDTKKEKAQEKLILKTMPKEKKTLTLLKNQAFECFKIAYSSILAHKLRSILTMLGIIIGIASVVCVVALGLGSQAKVLESIARLGTNTIEIRPGKGFGDLRSGKTRLNFSDLETLRSLEYLEAVDAHSNTSGVATYTNISLSARAEGVGVNNFAIEGLRIDAGRILNNDDVKNSTNVAVLDFNAKKNLFPDEKSENILGRVVLFNSQPFKIIGVLQKDTDKPIEDNVVRFYIPYTTLMNKLTGDRNLREIIVKVKDDVSSTLAENAIIRILEIKRGQKDFFTFNSDTFKQAITANKRTTTILTACVAVIALIVGGIGVMNIMLVSVSERTREIGIRMAIGARREDIMMQFLIEAVMICTIGAILGVILSIFVIFAFNTLSTDFPMILNAYSVLLGLLSSMFIGVVFGFFPARNAANLNPISALSKE</sequence>
<proteinExistence type="inferred from homology"/>
<feature type="chain" id="PRO_0000269933" description="Macrolide export ATP-binding/permease protein MacB">
    <location>
        <begin position="1"/>
        <end position="641"/>
    </location>
</feature>
<feature type="transmembrane region" description="Helical" evidence="1">
    <location>
        <begin position="265"/>
        <end position="285"/>
    </location>
</feature>
<feature type="transmembrane region" description="Helical" evidence="1">
    <location>
        <begin position="519"/>
        <end position="539"/>
    </location>
</feature>
<feature type="transmembrane region" description="Helical" evidence="1">
    <location>
        <begin position="571"/>
        <end position="591"/>
    </location>
</feature>
<feature type="transmembrane region" description="Helical" evidence="1">
    <location>
        <begin position="604"/>
        <end position="624"/>
    </location>
</feature>
<feature type="domain" description="ABC transporter" evidence="1">
    <location>
        <begin position="2"/>
        <end position="236"/>
    </location>
</feature>
<feature type="binding site" evidence="1">
    <location>
        <begin position="34"/>
        <end position="41"/>
    </location>
    <ligand>
        <name>ATP</name>
        <dbReference type="ChEBI" id="CHEBI:30616"/>
    </ligand>
</feature>
<accession>Q0PAR0</accession>
<keyword id="KW-0046">Antibiotic resistance</keyword>
<keyword id="KW-0067">ATP-binding</keyword>
<keyword id="KW-0997">Cell inner membrane</keyword>
<keyword id="KW-1003">Cell membrane</keyword>
<keyword id="KW-0472">Membrane</keyword>
<keyword id="KW-0547">Nucleotide-binding</keyword>
<keyword id="KW-1185">Reference proteome</keyword>
<keyword id="KW-1278">Translocase</keyword>
<keyword id="KW-0812">Transmembrane</keyword>
<keyword id="KW-1133">Transmembrane helix</keyword>
<keyword id="KW-0813">Transport</keyword>
<name>MACB_CAMJE</name>
<comment type="function">
    <text evidence="1">Non-canonical ABC transporter that contains transmembrane domains (TMD), which form a pore in the inner membrane, and an ATP-binding domain (NBD), which is responsible for energy generation. Confers resistance against macrolides.</text>
</comment>
<comment type="subunit">
    <text evidence="1">Homodimer.</text>
</comment>
<comment type="subcellular location">
    <subcellularLocation>
        <location evidence="1">Cell inner membrane</location>
        <topology evidence="1">Multi-pass membrane protein</topology>
    </subcellularLocation>
</comment>
<comment type="similarity">
    <text evidence="1">Belongs to the ABC transporter superfamily. Macrolide exporter (TC 3.A.1.122) family.</text>
</comment>
<evidence type="ECO:0000255" key="1">
    <source>
        <dbReference type="HAMAP-Rule" id="MF_01720"/>
    </source>
</evidence>
<protein>
    <recommendedName>
        <fullName evidence="1">Macrolide export ATP-binding/permease protein MacB</fullName>
        <ecNumber evidence="1">7.6.2.-</ecNumber>
    </recommendedName>
</protein>
<organism>
    <name type="scientific">Campylobacter jejuni subsp. jejuni serotype O:2 (strain ATCC 700819 / NCTC 11168)</name>
    <dbReference type="NCBI Taxonomy" id="192222"/>
    <lineage>
        <taxon>Bacteria</taxon>
        <taxon>Pseudomonadati</taxon>
        <taxon>Campylobacterota</taxon>
        <taxon>Epsilonproteobacteria</taxon>
        <taxon>Campylobacterales</taxon>
        <taxon>Campylobacteraceae</taxon>
        <taxon>Campylobacter</taxon>
    </lineage>
</organism>
<dbReference type="EC" id="7.6.2.-" evidence="1"/>
<dbReference type="EMBL" id="AL111168">
    <property type="protein sequence ID" value="CAL34753.1"/>
    <property type="molecule type" value="Genomic_DNA"/>
</dbReference>
<dbReference type="PIR" id="F81408">
    <property type="entry name" value="F81408"/>
</dbReference>
<dbReference type="RefSeq" id="WP_002858539.1">
    <property type="nucleotide sequence ID" value="NZ_SZUC01000002.1"/>
</dbReference>
<dbReference type="RefSeq" id="YP_002344037.1">
    <property type="nucleotide sequence ID" value="NC_002163.1"/>
</dbReference>
<dbReference type="SMR" id="Q0PAR0"/>
<dbReference type="IntAct" id="Q0PAR0">
    <property type="interactions" value="4"/>
</dbReference>
<dbReference type="STRING" id="192222.Cj0607"/>
<dbReference type="PaxDb" id="192222-Cj0607"/>
<dbReference type="EnsemblBacteria" id="CAL34753">
    <property type="protein sequence ID" value="CAL34753"/>
    <property type="gene ID" value="Cj0607"/>
</dbReference>
<dbReference type="GeneID" id="904935"/>
<dbReference type="KEGG" id="cje:Cj0607"/>
<dbReference type="PATRIC" id="fig|192222.6.peg.599"/>
<dbReference type="eggNOG" id="COG0577">
    <property type="taxonomic scope" value="Bacteria"/>
</dbReference>
<dbReference type="eggNOG" id="COG1136">
    <property type="taxonomic scope" value="Bacteria"/>
</dbReference>
<dbReference type="HOGENOM" id="CLU_000604_78_2_7"/>
<dbReference type="OrthoDB" id="9802264at2"/>
<dbReference type="Proteomes" id="UP000000799">
    <property type="component" value="Chromosome"/>
</dbReference>
<dbReference type="GO" id="GO:0005886">
    <property type="term" value="C:plasma membrane"/>
    <property type="evidence" value="ECO:0007669"/>
    <property type="project" value="UniProtKB-SubCell"/>
</dbReference>
<dbReference type="GO" id="GO:0005524">
    <property type="term" value="F:ATP binding"/>
    <property type="evidence" value="ECO:0007669"/>
    <property type="project" value="UniProtKB-KW"/>
</dbReference>
<dbReference type="GO" id="GO:0016887">
    <property type="term" value="F:ATP hydrolysis activity"/>
    <property type="evidence" value="ECO:0007669"/>
    <property type="project" value="InterPro"/>
</dbReference>
<dbReference type="GO" id="GO:0022857">
    <property type="term" value="F:transmembrane transporter activity"/>
    <property type="evidence" value="ECO:0007669"/>
    <property type="project" value="TreeGrafter"/>
</dbReference>
<dbReference type="GO" id="GO:0046677">
    <property type="term" value="P:response to antibiotic"/>
    <property type="evidence" value="ECO:0007669"/>
    <property type="project" value="UniProtKB-KW"/>
</dbReference>
<dbReference type="CDD" id="cd03255">
    <property type="entry name" value="ABC_MJ0796_LolCDE_FtsE"/>
    <property type="match status" value="1"/>
</dbReference>
<dbReference type="FunFam" id="3.40.50.300:FF:000032">
    <property type="entry name" value="Export ABC transporter ATP-binding protein"/>
    <property type="match status" value="1"/>
</dbReference>
<dbReference type="Gene3D" id="3.40.50.300">
    <property type="entry name" value="P-loop containing nucleotide triphosphate hydrolases"/>
    <property type="match status" value="1"/>
</dbReference>
<dbReference type="InterPro" id="IPR003593">
    <property type="entry name" value="AAA+_ATPase"/>
</dbReference>
<dbReference type="InterPro" id="IPR003838">
    <property type="entry name" value="ABC3_permease_C"/>
</dbReference>
<dbReference type="InterPro" id="IPR003439">
    <property type="entry name" value="ABC_transporter-like_ATP-bd"/>
</dbReference>
<dbReference type="InterPro" id="IPR017871">
    <property type="entry name" value="ABC_transporter-like_CS"/>
</dbReference>
<dbReference type="InterPro" id="IPR017911">
    <property type="entry name" value="MacB-like_ATP-bd"/>
</dbReference>
<dbReference type="InterPro" id="IPR025857">
    <property type="entry name" value="MacB_PCD"/>
</dbReference>
<dbReference type="InterPro" id="IPR050250">
    <property type="entry name" value="Macrolide_Exporter_MacB"/>
</dbReference>
<dbReference type="InterPro" id="IPR027417">
    <property type="entry name" value="P-loop_NTPase"/>
</dbReference>
<dbReference type="PANTHER" id="PTHR30572:SF14">
    <property type="entry name" value="MACROLIDE EXPORT ATP-BINDING_PERMEASE PROTEIN MACB"/>
    <property type="match status" value="1"/>
</dbReference>
<dbReference type="PANTHER" id="PTHR30572">
    <property type="entry name" value="MEMBRANE COMPONENT OF TRANSPORTER-RELATED"/>
    <property type="match status" value="1"/>
</dbReference>
<dbReference type="Pfam" id="PF00005">
    <property type="entry name" value="ABC_tran"/>
    <property type="match status" value="1"/>
</dbReference>
<dbReference type="Pfam" id="PF02687">
    <property type="entry name" value="FtsX"/>
    <property type="match status" value="1"/>
</dbReference>
<dbReference type="Pfam" id="PF12704">
    <property type="entry name" value="MacB_PCD"/>
    <property type="match status" value="1"/>
</dbReference>
<dbReference type="SMART" id="SM00382">
    <property type="entry name" value="AAA"/>
    <property type="match status" value="1"/>
</dbReference>
<dbReference type="SUPFAM" id="SSF52540">
    <property type="entry name" value="P-loop containing nucleoside triphosphate hydrolases"/>
    <property type="match status" value="1"/>
</dbReference>
<dbReference type="PROSITE" id="PS00211">
    <property type="entry name" value="ABC_TRANSPORTER_1"/>
    <property type="match status" value="1"/>
</dbReference>
<dbReference type="PROSITE" id="PS50893">
    <property type="entry name" value="ABC_TRANSPORTER_2"/>
    <property type="match status" value="1"/>
</dbReference>
<dbReference type="PROSITE" id="PS51267">
    <property type="entry name" value="MACB"/>
    <property type="match status" value="1"/>
</dbReference>
<gene>
    <name evidence="1" type="primary">macB</name>
    <name type="ordered locus">Cj0607</name>
</gene>